<protein>
    <recommendedName>
        <fullName evidence="1">Lipoprotein-releasing system ATP-binding protein LolD 1</fullName>
        <ecNumber evidence="1">7.6.2.-</ecNumber>
    </recommendedName>
</protein>
<organism>
    <name type="scientific">Chlorobium luteolum (strain DSM 273 / BCRC 81028 / 2530)</name>
    <name type="common">Pelodictyon luteolum</name>
    <dbReference type="NCBI Taxonomy" id="319225"/>
    <lineage>
        <taxon>Bacteria</taxon>
        <taxon>Pseudomonadati</taxon>
        <taxon>Chlorobiota</taxon>
        <taxon>Chlorobiia</taxon>
        <taxon>Chlorobiales</taxon>
        <taxon>Chlorobiaceae</taxon>
        <taxon>Chlorobium/Pelodictyon group</taxon>
        <taxon>Pelodictyon</taxon>
    </lineage>
</organism>
<comment type="function">
    <text evidence="1">Part of the ABC transporter complex LolCDE involved in the translocation of mature outer membrane-directed lipoproteins, from the inner membrane to the periplasmic chaperone, LolA. Responsible for the formation of the LolA-lipoprotein complex in an ATP-dependent manner.</text>
</comment>
<comment type="subunit">
    <text evidence="1">The complex is composed of two ATP-binding proteins (LolD) and two transmembrane proteins (LolC and LolE).</text>
</comment>
<comment type="subcellular location">
    <subcellularLocation>
        <location evidence="1">Cell inner membrane</location>
        <topology evidence="1">Peripheral membrane protein</topology>
    </subcellularLocation>
</comment>
<comment type="similarity">
    <text evidence="1">Belongs to the ABC transporter superfamily. Lipoprotein translocase (TC 3.A.1.125) family.</text>
</comment>
<gene>
    <name evidence="1" type="primary">lolD1</name>
    <name type="ordered locus">Plut_1480</name>
</gene>
<accession>Q3B2U2</accession>
<evidence type="ECO:0000255" key="1">
    <source>
        <dbReference type="HAMAP-Rule" id="MF_01708"/>
    </source>
</evidence>
<keyword id="KW-0067">ATP-binding</keyword>
<keyword id="KW-0997">Cell inner membrane</keyword>
<keyword id="KW-1003">Cell membrane</keyword>
<keyword id="KW-0472">Membrane</keyword>
<keyword id="KW-0547">Nucleotide-binding</keyword>
<keyword id="KW-1185">Reference proteome</keyword>
<keyword id="KW-1278">Translocase</keyword>
<keyword id="KW-0813">Transport</keyword>
<feature type="chain" id="PRO_0000272117" description="Lipoprotein-releasing system ATP-binding protein LolD 1">
    <location>
        <begin position="1"/>
        <end position="235"/>
    </location>
</feature>
<feature type="domain" description="ABC transporter" evidence="1">
    <location>
        <begin position="5"/>
        <end position="234"/>
    </location>
</feature>
<feature type="binding site" evidence="1">
    <location>
        <begin position="42"/>
        <end position="49"/>
    </location>
    <ligand>
        <name>ATP</name>
        <dbReference type="ChEBI" id="CHEBI:30616"/>
    </ligand>
</feature>
<sequence>MSMLFEARGITKSYALPGRPPLPILREADLSAAEGEMVTIIGASGSGKTTLLNMLGTLDTPDGGSIFFEGEPLFQDGRYRMTKKELARFRNRRIGFIFQFHHLLSDFTAQENVAMAEFIATGRLQPAKERAALLLQELGLSGRLNHLPSELSGGEQQRVAIARALMNQPKLVLADEPSGNLDSENSQRLYELMAALSKERRTSFIIVTHNETYAGMSDRCLRMQDGRLQLCTPLQ</sequence>
<name>LOLD1_CHLL3</name>
<reference key="1">
    <citation type="submission" date="2005-08" db="EMBL/GenBank/DDBJ databases">
        <title>Complete sequence of Pelodictyon luteolum DSM 273.</title>
        <authorList>
            <consortium name="US DOE Joint Genome Institute"/>
            <person name="Copeland A."/>
            <person name="Lucas S."/>
            <person name="Lapidus A."/>
            <person name="Barry K."/>
            <person name="Detter J.C."/>
            <person name="Glavina T."/>
            <person name="Hammon N."/>
            <person name="Israni S."/>
            <person name="Pitluck S."/>
            <person name="Bryant D."/>
            <person name="Schmutz J."/>
            <person name="Larimer F."/>
            <person name="Land M."/>
            <person name="Kyrpides N."/>
            <person name="Ivanova N."/>
            <person name="Richardson P."/>
        </authorList>
    </citation>
    <scope>NUCLEOTIDE SEQUENCE [LARGE SCALE GENOMIC DNA]</scope>
    <source>
        <strain>DSM 273 / BCRC 81028 / 2530</strain>
    </source>
</reference>
<proteinExistence type="inferred from homology"/>
<dbReference type="EC" id="7.6.2.-" evidence="1"/>
<dbReference type="EMBL" id="CP000096">
    <property type="protein sequence ID" value="ABB24339.1"/>
    <property type="molecule type" value="Genomic_DNA"/>
</dbReference>
<dbReference type="RefSeq" id="WP_011358211.1">
    <property type="nucleotide sequence ID" value="NC_007512.1"/>
</dbReference>
<dbReference type="SMR" id="Q3B2U2"/>
<dbReference type="STRING" id="319225.Plut_1480"/>
<dbReference type="KEGG" id="plt:Plut_1480"/>
<dbReference type="eggNOG" id="COG1136">
    <property type="taxonomic scope" value="Bacteria"/>
</dbReference>
<dbReference type="HOGENOM" id="CLU_000604_1_22_10"/>
<dbReference type="OrthoDB" id="9769100at2"/>
<dbReference type="Proteomes" id="UP000002709">
    <property type="component" value="Chromosome"/>
</dbReference>
<dbReference type="GO" id="GO:0005886">
    <property type="term" value="C:plasma membrane"/>
    <property type="evidence" value="ECO:0007669"/>
    <property type="project" value="UniProtKB-SubCell"/>
</dbReference>
<dbReference type="GO" id="GO:0005524">
    <property type="term" value="F:ATP binding"/>
    <property type="evidence" value="ECO:0007669"/>
    <property type="project" value="UniProtKB-KW"/>
</dbReference>
<dbReference type="GO" id="GO:0016887">
    <property type="term" value="F:ATP hydrolysis activity"/>
    <property type="evidence" value="ECO:0007669"/>
    <property type="project" value="InterPro"/>
</dbReference>
<dbReference type="GO" id="GO:0022857">
    <property type="term" value="F:transmembrane transporter activity"/>
    <property type="evidence" value="ECO:0007669"/>
    <property type="project" value="TreeGrafter"/>
</dbReference>
<dbReference type="CDD" id="cd03255">
    <property type="entry name" value="ABC_MJ0796_LolCDE_FtsE"/>
    <property type="match status" value="1"/>
</dbReference>
<dbReference type="Gene3D" id="3.40.50.300">
    <property type="entry name" value="P-loop containing nucleotide triphosphate hydrolases"/>
    <property type="match status" value="1"/>
</dbReference>
<dbReference type="InterPro" id="IPR003593">
    <property type="entry name" value="AAA+_ATPase"/>
</dbReference>
<dbReference type="InterPro" id="IPR003439">
    <property type="entry name" value="ABC_transporter-like_ATP-bd"/>
</dbReference>
<dbReference type="InterPro" id="IPR017871">
    <property type="entry name" value="ABC_transporter-like_CS"/>
</dbReference>
<dbReference type="InterPro" id="IPR015854">
    <property type="entry name" value="ABC_transpr_LolD-like"/>
</dbReference>
<dbReference type="InterPro" id="IPR017911">
    <property type="entry name" value="MacB-like_ATP-bd"/>
</dbReference>
<dbReference type="InterPro" id="IPR027417">
    <property type="entry name" value="P-loop_NTPase"/>
</dbReference>
<dbReference type="PANTHER" id="PTHR24220">
    <property type="entry name" value="IMPORT ATP-BINDING PROTEIN"/>
    <property type="match status" value="1"/>
</dbReference>
<dbReference type="PANTHER" id="PTHR24220:SF689">
    <property type="entry name" value="LIPOPROTEIN-RELEASING SYSTEM ATP-BINDING PROTEIN LOLD"/>
    <property type="match status" value="1"/>
</dbReference>
<dbReference type="Pfam" id="PF00005">
    <property type="entry name" value="ABC_tran"/>
    <property type="match status" value="1"/>
</dbReference>
<dbReference type="SMART" id="SM00382">
    <property type="entry name" value="AAA"/>
    <property type="match status" value="1"/>
</dbReference>
<dbReference type="SUPFAM" id="SSF52540">
    <property type="entry name" value="P-loop containing nucleoside triphosphate hydrolases"/>
    <property type="match status" value="1"/>
</dbReference>
<dbReference type="PROSITE" id="PS00211">
    <property type="entry name" value="ABC_TRANSPORTER_1"/>
    <property type="match status" value="1"/>
</dbReference>
<dbReference type="PROSITE" id="PS50893">
    <property type="entry name" value="ABC_TRANSPORTER_2"/>
    <property type="match status" value="1"/>
</dbReference>
<dbReference type="PROSITE" id="PS51244">
    <property type="entry name" value="LOLD"/>
    <property type="match status" value="1"/>
</dbReference>